<accession>A3PMI4</accession>
<evidence type="ECO:0000255" key="1">
    <source>
        <dbReference type="HAMAP-Rule" id="MF_00654"/>
    </source>
</evidence>
<proteinExistence type="inferred from homology"/>
<keyword id="KW-0560">Oxidoreductase</keyword>
<keyword id="KW-0884">PQQ biosynthesis</keyword>
<reference key="1">
    <citation type="submission" date="2007-02" db="EMBL/GenBank/DDBJ databases">
        <title>Complete sequence of chromosome 1 of Rhodobacter sphaeroides ATCC 17029.</title>
        <authorList>
            <person name="Copeland A."/>
            <person name="Lucas S."/>
            <person name="Lapidus A."/>
            <person name="Barry K."/>
            <person name="Detter J.C."/>
            <person name="Glavina del Rio T."/>
            <person name="Hammon N."/>
            <person name="Israni S."/>
            <person name="Dalin E."/>
            <person name="Tice H."/>
            <person name="Pitluck S."/>
            <person name="Kiss H."/>
            <person name="Brettin T."/>
            <person name="Bruce D."/>
            <person name="Han C."/>
            <person name="Tapia R."/>
            <person name="Gilna P."/>
            <person name="Schmutz J."/>
            <person name="Larimer F."/>
            <person name="Land M."/>
            <person name="Hauser L."/>
            <person name="Kyrpides N."/>
            <person name="Mikhailova N."/>
            <person name="Richardson P."/>
            <person name="Mackenzie C."/>
            <person name="Choudhary M."/>
            <person name="Donohue T.J."/>
            <person name="Kaplan S."/>
        </authorList>
    </citation>
    <scope>NUCLEOTIDE SEQUENCE [LARGE SCALE GENOMIC DNA]</scope>
    <source>
        <strain>ATCC 17029 / ATH 2.4.9</strain>
    </source>
</reference>
<gene>
    <name evidence="1" type="primary">pqqC</name>
    <name type="ordered locus">Rsph17029_2448</name>
</gene>
<comment type="function">
    <text evidence="1">Ring cyclization and eight-electron oxidation of 3a-(2-amino-2-carboxyethyl)-4,5-dioxo-4,5,6,7,8,9-hexahydroquinoline-7,9-dicarboxylic-acid to PQQ.</text>
</comment>
<comment type="catalytic activity">
    <reaction evidence="1">
        <text>6-(2-amino-2-carboxyethyl)-7,8-dioxo-1,2,3,4,7,8-hexahydroquinoline-2,4-dicarboxylate + 3 O2 = pyrroloquinoline quinone + 2 H2O2 + 2 H2O + H(+)</text>
        <dbReference type="Rhea" id="RHEA:10692"/>
        <dbReference type="ChEBI" id="CHEBI:15377"/>
        <dbReference type="ChEBI" id="CHEBI:15378"/>
        <dbReference type="ChEBI" id="CHEBI:15379"/>
        <dbReference type="ChEBI" id="CHEBI:16240"/>
        <dbReference type="ChEBI" id="CHEBI:58442"/>
        <dbReference type="ChEBI" id="CHEBI:58778"/>
        <dbReference type="EC" id="1.3.3.11"/>
    </reaction>
</comment>
<comment type="pathway">
    <text evidence="1">Cofactor biosynthesis; pyrroloquinoline quinone biosynthesis.</text>
</comment>
<comment type="similarity">
    <text evidence="1">Belongs to the PqqC family.</text>
</comment>
<name>PQQC_CERS1</name>
<feature type="chain" id="PRO_1000061677" description="Pyrroloquinoline-quinone synthase">
    <location>
        <begin position="1"/>
        <end position="255"/>
    </location>
</feature>
<dbReference type="EC" id="1.3.3.11" evidence="1"/>
<dbReference type="EMBL" id="CP000577">
    <property type="protein sequence ID" value="ABN77550.1"/>
    <property type="molecule type" value="Genomic_DNA"/>
</dbReference>
<dbReference type="RefSeq" id="WP_011841673.1">
    <property type="nucleotide sequence ID" value="NC_009049.1"/>
</dbReference>
<dbReference type="SMR" id="A3PMI4"/>
<dbReference type="KEGG" id="rsh:Rsph17029_2448"/>
<dbReference type="HOGENOM" id="CLU_080136_0_0_5"/>
<dbReference type="UniPathway" id="UPA00539"/>
<dbReference type="GO" id="GO:0033732">
    <property type="term" value="F:pyrroloquinoline-quinone synthase activity"/>
    <property type="evidence" value="ECO:0007669"/>
    <property type="project" value="UniProtKB-EC"/>
</dbReference>
<dbReference type="GO" id="GO:0018189">
    <property type="term" value="P:pyrroloquinoline quinone biosynthetic process"/>
    <property type="evidence" value="ECO:0007669"/>
    <property type="project" value="UniProtKB-UniRule"/>
</dbReference>
<dbReference type="GO" id="GO:0006790">
    <property type="term" value="P:sulfur compound metabolic process"/>
    <property type="evidence" value="ECO:0007669"/>
    <property type="project" value="UniProtKB-ARBA"/>
</dbReference>
<dbReference type="Gene3D" id="1.20.910.10">
    <property type="entry name" value="Heme oxygenase-like"/>
    <property type="match status" value="1"/>
</dbReference>
<dbReference type="HAMAP" id="MF_00654">
    <property type="entry name" value="PQQ_syn_PqqC"/>
    <property type="match status" value="1"/>
</dbReference>
<dbReference type="InterPro" id="IPR016084">
    <property type="entry name" value="Haem_Oase-like_multi-hlx"/>
</dbReference>
<dbReference type="InterPro" id="IPR011845">
    <property type="entry name" value="PqqC"/>
</dbReference>
<dbReference type="InterPro" id="IPR039068">
    <property type="entry name" value="PqqC-like"/>
</dbReference>
<dbReference type="InterPro" id="IPR004305">
    <property type="entry name" value="Thiaminase-2/PQQC"/>
</dbReference>
<dbReference type="NCBIfam" id="TIGR02111">
    <property type="entry name" value="PQQ_syn_pqqC"/>
    <property type="match status" value="1"/>
</dbReference>
<dbReference type="PANTHER" id="PTHR40279:SF3">
    <property type="entry name" value="4-AMINOBENZOATE SYNTHASE"/>
    <property type="match status" value="1"/>
</dbReference>
<dbReference type="PANTHER" id="PTHR40279">
    <property type="entry name" value="PQQC-LIKE PROTEIN"/>
    <property type="match status" value="1"/>
</dbReference>
<dbReference type="Pfam" id="PF03070">
    <property type="entry name" value="TENA_THI-4"/>
    <property type="match status" value="1"/>
</dbReference>
<dbReference type="SUPFAM" id="SSF48613">
    <property type="entry name" value="Heme oxygenase-like"/>
    <property type="match status" value="1"/>
</dbReference>
<sequence length="255" mass="29090">MSLDLSTSLSPARPLESADAMEERLREIGAARYHDRHPFHHMLHGGELTKGQVQAWALNRYYYQCTIPVKDAVVISRFRDRATRIEWRHRLEDHDGAEGAEGGIDRWLILTDGLGLDRAYVESTDGILPATRFAVEAYVHFVRDRSPLEAIASCLTELFAPNIHATRISGMLSHYDFINPTVMAYFQRRLTQAPRDADYALRYVRDHARTPEERAAVCNALIFKTQVLWTQLDALHHAYVLGHVPPGAFVPEEMR</sequence>
<protein>
    <recommendedName>
        <fullName evidence="1">Pyrroloquinoline-quinone synthase</fullName>
        <ecNumber evidence="1">1.3.3.11</ecNumber>
    </recommendedName>
    <alternativeName>
        <fullName evidence="1">Coenzyme PQQ synthesis protein C</fullName>
    </alternativeName>
    <alternativeName>
        <fullName evidence="1">Pyrroloquinoline quinone biosynthesis protein C</fullName>
    </alternativeName>
</protein>
<organism>
    <name type="scientific">Cereibacter sphaeroides (strain ATCC 17029 / ATH 2.4.9)</name>
    <name type="common">Rhodobacter sphaeroides</name>
    <dbReference type="NCBI Taxonomy" id="349101"/>
    <lineage>
        <taxon>Bacteria</taxon>
        <taxon>Pseudomonadati</taxon>
        <taxon>Pseudomonadota</taxon>
        <taxon>Alphaproteobacteria</taxon>
        <taxon>Rhodobacterales</taxon>
        <taxon>Paracoccaceae</taxon>
        <taxon>Cereibacter</taxon>
    </lineage>
</organism>